<organism>
    <name type="scientific">Cereibacter sphaeroides (strain ATCC 17029 / ATH 2.4.9)</name>
    <name type="common">Rhodobacter sphaeroides</name>
    <dbReference type="NCBI Taxonomy" id="349101"/>
    <lineage>
        <taxon>Bacteria</taxon>
        <taxon>Pseudomonadati</taxon>
        <taxon>Pseudomonadota</taxon>
        <taxon>Alphaproteobacteria</taxon>
        <taxon>Rhodobacterales</taxon>
        <taxon>Paracoccaceae</taxon>
        <taxon>Cereibacter</taxon>
    </lineage>
</organism>
<feature type="chain" id="PRO_0000356628" description="Large ribosomal subunit protein bL33">
    <location>
        <begin position="1"/>
        <end position="55"/>
    </location>
</feature>
<gene>
    <name evidence="1" type="primary">rpmG</name>
    <name type="ordered locus">Rsph17029_0534</name>
</gene>
<reference key="1">
    <citation type="submission" date="2007-02" db="EMBL/GenBank/DDBJ databases">
        <title>Complete sequence of chromosome 1 of Rhodobacter sphaeroides ATCC 17029.</title>
        <authorList>
            <person name="Copeland A."/>
            <person name="Lucas S."/>
            <person name="Lapidus A."/>
            <person name="Barry K."/>
            <person name="Detter J.C."/>
            <person name="Glavina del Rio T."/>
            <person name="Hammon N."/>
            <person name="Israni S."/>
            <person name="Dalin E."/>
            <person name="Tice H."/>
            <person name="Pitluck S."/>
            <person name="Kiss H."/>
            <person name="Brettin T."/>
            <person name="Bruce D."/>
            <person name="Han C."/>
            <person name="Tapia R."/>
            <person name="Gilna P."/>
            <person name="Schmutz J."/>
            <person name="Larimer F."/>
            <person name="Land M."/>
            <person name="Hauser L."/>
            <person name="Kyrpides N."/>
            <person name="Mikhailova N."/>
            <person name="Richardson P."/>
            <person name="Mackenzie C."/>
            <person name="Choudhary M."/>
            <person name="Donohue T.J."/>
            <person name="Kaplan S."/>
        </authorList>
    </citation>
    <scope>NUCLEOTIDE SEQUENCE [LARGE SCALE GENOMIC DNA]</scope>
    <source>
        <strain>ATCC 17029 / ATH 2.4.9</strain>
    </source>
</reference>
<protein>
    <recommendedName>
        <fullName evidence="1">Large ribosomal subunit protein bL33</fullName>
    </recommendedName>
    <alternativeName>
        <fullName evidence="2">50S ribosomal protein L33</fullName>
    </alternativeName>
</protein>
<keyword id="KW-0687">Ribonucleoprotein</keyword>
<keyword id="KW-0689">Ribosomal protein</keyword>
<proteinExistence type="inferred from homology"/>
<dbReference type="EMBL" id="CP000577">
    <property type="protein sequence ID" value="ABN75650.1"/>
    <property type="molecule type" value="Genomic_DNA"/>
</dbReference>
<dbReference type="RefSeq" id="WP_002722806.1">
    <property type="nucleotide sequence ID" value="NC_009049.1"/>
</dbReference>
<dbReference type="SMR" id="A3PH34"/>
<dbReference type="GeneID" id="67445676"/>
<dbReference type="KEGG" id="rsh:Rsph17029_0534"/>
<dbReference type="HOGENOM" id="CLU_190949_1_1_5"/>
<dbReference type="GO" id="GO:0022625">
    <property type="term" value="C:cytosolic large ribosomal subunit"/>
    <property type="evidence" value="ECO:0007669"/>
    <property type="project" value="TreeGrafter"/>
</dbReference>
<dbReference type="GO" id="GO:0003735">
    <property type="term" value="F:structural constituent of ribosome"/>
    <property type="evidence" value="ECO:0007669"/>
    <property type="project" value="InterPro"/>
</dbReference>
<dbReference type="GO" id="GO:0006412">
    <property type="term" value="P:translation"/>
    <property type="evidence" value="ECO:0007669"/>
    <property type="project" value="UniProtKB-UniRule"/>
</dbReference>
<dbReference type="Gene3D" id="2.20.28.120">
    <property type="entry name" value="Ribosomal protein L33"/>
    <property type="match status" value="1"/>
</dbReference>
<dbReference type="HAMAP" id="MF_00294">
    <property type="entry name" value="Ribosomal_bL33"/>
    <property type="match status" value="1"/>
</dbReference>
<dbReference type="InterPro" id="IPR001705">
    <property type="entry name" value="Ribosomal_bL33"/>
</dbReference>
<dbReference type="InterPro" id="IPR018264">
    <property type="entry name" value="Ribosomal_bL33_CS"/>
</dbReference>
<dbReference type="InterPro" id="IPR038584">
    <property type="entry name" value="Ribosomal_bL33_sf"/>
</dbReference>
<dbReference type="InterPro" id="IPR011332">
    <property type="entry name" value="Ribosomal_zn-bd"/>
</dbReference>
<dbReference type="NCBIfam" id="NF001860">
    <property type="entry name" value="PRK00595.1"/>
    <property type="match status" value="1"/>
</dbReference>
<dbReference type="NCBIfam" id="TIGR01023">
    <property type="entry name" value="rpmG_bact"/>
    <property type="match status" value="1"/>
</dbReference>
<dbReference type="PANTHER" id="PTHR15238">
    <property type="entry name" value="54S RIBOSOMAL PROTEIN L39, MITOCHONDRIAL"/>
    <property type="match status" value="1"/>
</dbReference>
<dbReference type="PANTHER" id="PTHR15238:SF1">
    <property type="entry name" value="LARGE RIBOSOMAL SUBUNIT PROTEIN BL33M"/>
    <property type="match status" value="1"/>
</dbReference>
<dbReference type="Pfam" id="PF00471">
    <property type="entry name" value="Ribosomal_L33"/>
    <property type="match status" value="1"/>
</dbReference>
<dbReference type="SUPFAM" id="SSF57829">
    <property type="entry name" value="Zn-binding ribosomal proteins"/>
    <property type="match status" value="1"/>
</dbReference>
<dbReference type="PROSITE" id="PS00582">
    <property type="entry name" value="RIBOSOMAL_L33"/>
    <property type="match status" value="1"/>
</dbReference>
<name>RL33_CERS1</name>
<accession>A3PH34</accession>
<evidence type="ECO:0000255" key="1">
    <source>
        <dbReference type="HAMAP-Rule" id="MF_00294"/>
    </source>
</evidence>
<evidence type="ECO:0000305" key="2"/>
<comment type="similarity">
    <text evidence="1">Belongs to the bacterial ribosomal protein bL33 family.</text>
</comment>
<sequence>MAKPTTIKIRLNSTAGTGHFYVTKKNARTMTDKMVVRKYDPVKREHVEYKEGKIK</sequence>